<sequence>MASKVVFFAAALMAAMVAISGAQLSESEMRFRDRQCQREVQDSPLDACRQVLDRQLTGRERFQPMFRRPGALGLRMQCCQQLQDVSRECRCAAIRRMVRSYEESMPMPLEQGWSSSSSEYYGGEGSSSEQGYYGEGSSEEGYYGEQQQQPGMTRVRLTRARQYAAQLPSMCRVEPQQCSIFAAGQY</sequence>
<keyword id="KW-0020">Allergen</keyword>
<keyword id="KW-0903">Direct protein sequencing</keyword>
<keyword id="KW-1185">Reference proteome</keyword>
<keyword id="KW-0964">Secreted</keyword>
<keyword id="KW-0708">Seed storage protein</keyword>
<keyword id="KW-0732">Signal</keyword>
<keyword id="KW-0758">Storage protein</keyword>
<comment type="function">
    <text evidence="5">Seed storage protein.</text>
</comment>
<comment type="subcellular location">
    <subcellularLocation>
        <location evidence="5">Secreted</location>
    </subcellularLocation>
</comment>
<comment type="allergen">
    <text evidence="3 4">Causes an allergic reaction in human. Binds to IgE.</text>
</comment>
<comment type="similarity">
    <text evidence="5">Belongs to the 2S seed storage albumins family.</text>
</comment>
<comment type="sequence caution" evidence="5">
    <conflict type="erroneous initiation">
        <sequence resource="EMBL-CDS" id="AAA72362"/>
    </conflict>
    <text>Truncated N-terminus.</text>
</comment>
<accession>P29835</accession>
<accession>P93414</accession>
<accession>Q0DH05</accession>
<protein>
    <recommendedName>
        <fullName>19 kDa globulin</fullName>
    </recommendedName>
    <alternativeName>
        <fullName>Alpha-globulin</fullName>
    </alternativeName>
    <allergenName>Ory s 19kD</allergenName>
</protein>
<reference key="1">
    <citation type="journal article" date="1992" name="Plant Mol. Biol.">
        <title>A novel cereal storage protein: molecular genetics of the 19 kDa globulin of rice.</title>
        <authorList>
            <person name="Shorrosh B.S."/>
            <person name="Wen L."/>
            <person name="Zen K.C."/>
            <person name="Huang J.K."/>
            <person name="Pan J.S."/>
            <person name="Hermodson M.A."/>
            <person name="Tanaka K."/>
            <person name="Muthukrishnan S."/>
            <person name="Reeck G.R."/>
        </authorList>
    </citation>
    <scope>NUCLEOTIDE SEQUENCE [MRNA]</scope>
    <scope>PARTIAL PROTEIN SEQUENCE</scope>
    <source>
        <strain>cv. Nipponbare</strain>
        <tissue>Endosperm</tissue>
    </source>
</reference>
<reference key="2">
    <citation type="journal article" date="1996" name="Gene">
        <title>Cloning of rhe rice seed alpha-globulin-encoding gene: sequence similarity of the 5'-flanking region to those of the genes encoding wheat high molecular-weight glutenin and barley D hordein.</title>
        <authorList>
            <person name="Nakase M."/>
            <person name="Hotta H."/>
            <person name="Adachi T."/>
            <person name="Aoki N."/>
            <person name="Nakamura R."/>
            <person name="Masumura T."/>
            <person name="Tanaka K."/>
            <person name="Matsuda T."/>
        </authorList>
    </citation>
    <scope>NUCLEOTIDE SEQUENCE [GENOMIC DNA]</scope>
    <source>
        <tissue>Endosperm</tissue>
    </source>
</reference>
<reference key="3">
    <citation type="submission" date="2006-11" db="EMBL/GenBank/DDBJ databases">
        <title>Molecular cloning of alpha-globulin genes in rice seeds.</title>
        <authorList>
            <person name="Yoon U.H."/>
            <person name="Kim Y.H."/>
        </authorList>
    </citation>
    <scope>NUCLEOTIDE SEQUENCE [MRNA]</scope>
    <source>
        <strain>cv. Ilpoombyeo</strain>
        <tissue>Seed</tissue>
    </source>
</reference>
<reference key="4">
    <citation type="submission" date="2009-08" db="EMBL/GenBank/DDBJ databases">
        <title>Structural and expression analysis of germinating seed genes in Oryza sativa L.</title>
        <authorList>
            <person name="Yoon U.H."/>
            <person name="Kim Y.H."/>
        </authorList>
    </citation>
    <scope>NUCLEOTIDE SEQUENCE [MRNA]</scope>
    <source>
        <strain>cv. Ilpoombyeo</strain>
        <tissue>Seed</tissue>
    </source>
</reference>
<reference key="5">
    <citation type="journal article" date="2005" name="Mol. Genet. Genomics">
        <title>A fine physical map of the rice chromosome 5.</title>
        <authorList>
            <person name="Cheng C.-H."/>
            <person name="Chung M.C."/>
            <person name="Liu S.-M."/>
            <person name="Chen S.-K."/>
            <person name="Kao F.Y."/>
            <person name="Lin S.-J."/>
            <person name="Hsiao S.-H."/>
            <person name="Tseng I.C."/>
            <person name="Hsing Y.-I.C."/>
            <person name="Wu H.-P."/>
            <person name="Chen C.-S."/>
            <person name="Shaw J.-F."/>
            <person name="Wu J."/>
            <person name="Matsumoto T."/>
            <person name="Sasaki T."/>
            <person name="Chen H.-C."/>
            <person name="Chow T.-Y."/>
        </authorList>
    </citation>
    <scope>NUCLEOTIDE SEQUENCE [LARGE SCALE GENOMIC DNA]</scope>
    <source>
        <strain>cv. Nipponbare</strain>
    </source>
</reference>
<reference key="6">
    <citation type="journal article" date="2005" name="Nature">
        <title>The map-based sequence of the rice genome.</title>
        <authorList>
            <consortium name="International rice genome sequencing project (IRGSP)"/>
        </authorList>
    </citation>
    <scope>NUCLEOTIDE SEQUENCE [LARGE SCALE GENOMIC DNA]</scope>
    <source>
        <strain>cv. Nipponbare</strain>
    </source>
</reference>
<reference key="7">
    <citation type="journal article" date="2008" name="Nucleic Acids Res.">
        <title>The rice annotation project database (RAP-DB): 2008 update.</title>
        <authorList>
            <consortium name="The rice annotation project (RAP)"/>
        </authorList>
    </citation>
    <scope>GENOME REANNOTATION</scope>
    <source>
        <strain>cv. Nipponbare</strain>
    </source>
</reference>
<reference key="8">
    <citation type="journal article" date="2013" name="Rice">
        <title>Improvement of the Oryza sativa Nipponbare reference genome using next generation sequence and optical map data.</title>
        <authorList>
            <person name="Kawahara Y."/>
            <person name="de la Bastide M."/>
            <person name="Hamilton J.P."/>
            <person name="Kanamori H."/>
            <person name="McCombie W.R."/>
            <person name="Ouyang S."/>
            <person name="Schwartz D.C."/>
            <person name="Tanaka T."/>
            <person name="Wu J."/>
            <person name="Zhou S."/>
            <person name="Childs K.L."/>
            <person name="Davidson R.M."/>
            <person name="Lin H."/>
            <person name="Quesada-Ocampo L."/>
            <person name="Vaillancourt B."/>
            <person name="Sakai H."/>
            <person name="Lee S.S."/>
            <person name="Kim J."/>
            <person name="Numa H."/>
            <person name="Itoh T."/>
            <person name="Buell C.R."/>
            <person name="Matsumoto T."/>
        </authorList>
    </citation>
    <scope>GENOME REANNOTATION</scope>
    <source>
        <strain>cv. Nipponbare</strain>
    </source>
</reference>
<reference key="9">
    <citation type="journal article" date="2005" name="PLoS Biol.">
        <title>The genomes of Oryza sativa: a history of duplications.</title>
        <authorList>
            <person name="Yu J."/>
            <person name="Wang J."/>
            <person name="Lin W."/>
            <person name="Li S."/>
            <person name="Li H."/>
            <person name="Zhou J."/>
            <person name="Ni P."/>
            <person name="Dong W."/>
            <person name="Hu S."/>
            <person name="Zeng C."/>
            <person name="Zhang J."/>
            <person name="Zhang Y."/>
            <person name="Li R."/>
            <person name="Xu Z."/>
            <person name="Li S."/>
            <person name="Li X."/>
            <person name="Zheng H."/>
            <person name="Cong L."/>
            <person name="Lin L."/>
            <person name="Yin J."/>
            <person name="Geng J."/>
            <person name="Li G."/>
            <person name="Shi J."/>
            <person name="Liu J."/>
            <person name="Lv H."/>
            <person name="Li J."/>
            <person name="Wang J."/>
            <person name="Deng Y."/>
            <person name="Ran L."/>
            <person name="Shi X."/>
            <person name="Wang X."/>
            <person name="Wu Q."/>
            <person name="Li C."/>
            <person name="Ren X."/>
            <person name="Wang J."/>
            <person name="Wang X."/>
            <person name="Li D."/>
            <person name="Liu D."/>
            <person name="Zhang X."/>
            <person name="Ji Z."/>
            <person name="Zhao W."/>
            <person name="Sun Y."/>
            <person name="Zhang Z."/>
            <person name="Bao J."/>
            <person name="Han Y."/>
            <person name="Dong L."/>
            <person name="Ji J."/>
            <person name="Chen P."/>
            <person name="Wu S."/>
            <person name="Liu J."/>
            <person name="Xiao Y."/>
            <person name="Bu D."/>
            <person name="Tan J."/>
            <person name="Yang L."/>
            <person name="Ye C."/>
            <person name="Zhang J."/>
            <person name="Xu J."/>
            <person name="Zhou Y."/>
            <person name="Yu Y."/>
            <person name="Zhang B."/>
            <person name="Zhuang S."/>
            <person name="Wei H."/>
            <person name="Liu B."/>
            <person name="Lei M."/>
            <person name="Yu H."/>
            <person name="Li Y."/>
            <person name="Xu H."/>
            <person name="Wei S."/>
            <person name="He X."/>
            <person name="Fang L."/>
            <person name="Zhang Z."/>
            <person name="Zhang Y."/>
            <person name="Huang X."/>
            <person name="Su Z."/>
            <person name="Tong W."/>
            <person name="Li J."/>
            <person name="Tong Z."/>
            <person name="Li S."/>
            <person name="Ye J."/>
            <person name="Wang L."/>
            <person name="Fang L."/>
            <person name="Lei T."/>
            <person name="Chen C.-S."/>
            <person name="Chen H.-C."/>
            <person name="Xu Z."/>
            <person name="Li H."/>
            <person name="Huang H."/>
            <person name="Zhang F."/>
            <person name="Xu H."/>
            <person name="Li N."/>
            <person name="Zhao C."/>
            <person name="Li S."/>
            <person name="Dong L."/>
            <person name="Huang Y."/>
            <person name="Li L."/>
            <person name="Xi Y."/>
            <person name="Qi Q."/>
            <person name="Li W."/>
            <person name="Zhang B."/>
            <person name="Hu W."/>
            <person name="Zhang Y."/>
            <person name="Tian X."/>
            <person name="Jiao Y."/>
            <person name="Liang X."/>
            <person name="Jin J."/>
            <person name="Gao L."/>
            <person name="Zheng W."/>
            <person name="Hao B."/>
            <person name="Liu S.-M."/>
            <person name="Wang W."/>
            <person name="Yuan L."/>
            <person name="Cao M."/>
            <person name="McDermott J."/>
            <person name="Samudrala R."/>
            <person name="Wang J."/>
            <person name="Wong G.K.-S."/>
            <person name="Yang H."/>
        </authorList>
    </citation>
    <scope>NUCLEOTIDE SEQUENCE [LARGE SCALE GENOMIC DNA]</scope>
    <source>
        <strain>cv. Nipponbare</strain>
    </source>
</reference>
<reference key="10">
    <citation type="submission" date="2006-10" db="EMBL/GenBank/DDBJ databases">
        <title>Oryza sativa full length cDNA.</title>
        <authorList>
            <consortium name="The rice full-length cDNA consortium"/>
        </authorList>
    </citation>
    <scope>NUCLEOTIDE SEQUENCE [LARGE SCALE MRNA]</scope>
    <source>
        <strain>cv. Nipponbare</strain>
    </source>
</reference>
<reference key="11">
    <citation type="journal article" date="1993" name="Biochem. Biophys. Res. Commun.">
        <title>Nucleotide sequence of an abundant rice seed globulin: homology with the high molecular weight glutelins of wheat, rye and triticale.</title>
        <authorList>
            <person name="Krishnan H.B."/>
            <person name="Pueppke S.G."/>
        </authorList>
    </citation>
    <scope>NUCLEOTIDE SEQUENCE [MRNA] OF 5-186</scope>
    <source>
        <strain>cv. Lemont</strain>
        <tissue>Endosperm</tissue>
    </source>
</reference>
<reference key="12">
    <citation type="journal article" date="2004" name="Nucleic Acids Res.">
        <title>Rice proteome database based on two-dimensional polyacrylamide gel electrophoresis: its status in 2003.</title>
        <authorList>
            <person name="Komatsu S."/>
            <person name="Kojima K."/>
            <person name="Suzuki K."/>
            <person name="Ozaki K."/>
            <person name="Higo K."/>
        </authorList>
    </citation>
    <scope>PROTEIN SEQUENCE OF 141-151</scope>
    <source>
        <strain>cv. Nipponbare</strain>
        <tissue>Endosperm</tissue>
    </source>
</reference>
<reference key="13">
    <citation type="journal article" date="2011" name="Regul. Toxicol. Pharmacol.">
        <title>Proteomic analysis of known and candidate rice allergens between non-transgenic and transgenic plants.</title>
        <authorList>
            <person name="Satoh R."/>
            <person name="Nakamura R."/>
            <person name="Komatsu A."/>
            <person name="Oshima M."/>
            <person name="Teshima R."/>
        </authorList>
    </citation>
    <scope>IDENTIFICATION BY MASS SPECTROMETRY</scope>
    <scope>ALLERGEN</scope>
</reference>
<reference key="14">
    <citation type="journal article" date="2013" name="J. Agric. Food Chem.">
        <title>Identification of rice proteins recognized by the IgE antibodies of patients with food allergies.</title>
        <authorList>
            <person name="Golias J."/>
            <person name="Humlova Z."/>
            <person name="Halada P."/>
            <person name="Habova V."/>
            <person name="Janatkova I."/>
            <person name="Tuckova L."/>
        </authorList>
    </citation>
    <scope>IDENTIFICATION BY MASS SPECTROMETRY</scope>
    <scope>ALLERGEN</scope>
</reference>
<evidence type="ECO:0000255" key="1"/>
<evidence type="ECO:0000256" key="2">
    <source>
        <dbReference type="SAM" id="MobiDB-lite"/>
    </source>
</evidence>
<evidence type="ECO:0000269" key="3">
    <source>
    </source>
</evidence>
<evidence type="ECO:0000269" key="4">
    <source>
    </source>
</evidence>
<evidence type="ECO:0000305" key="5"/>
<evidence type="ECO:0000312" key="6">
    <source>
        <dbReference type="EMBL" id="EEE64246.1"/>
    </source>
</evidence>
<dbReference type="EMBL" id="X63990">
    <property type="protein sequence ID" value="CAA45400.1"/>
    <property type="molecule type" value="mRNA"/>
</dbReference>
<dbReference type="EMBL" id="D50643">
    <property type="protein sequence ID" value="BAA09308.1"/>
    <property type="molecule type" value="Genomic_DNA"/>
</dbReference>
<dbReference type="EMBL" id="EF122478">
    <property type="protein sequence ID" value="ABL74565.1"/>
    <property type="molecule type" value="mRNA"/>
</dbReference>
<dbReference type="EMBL" id="GQ848069">
    <property type="protein sequence ID" value="ADM86882.1"/>
    <property type="molecule type" value="mRNA"/>
</dbReference>
<dbReference type="EMBL" id="AC113332">
    <property type="protein sequence ID" value="AAT93857.1"/>
    <property type="molecule type" value="Genomic_DNA"/>
</dbReference>
<dbReference type="EMBL" id="AC130605">
    <property type="protein sequence ID" value="AAT44292.1"/>
    <property type="molecule type" value="Genomic_DNA"/>
</dbReference>
<dbReference type="EMBL" id="AP008211">
    <property type="protein sequence ID" value="BAF17868.1"/>
    <property type="molecule type" value="Genomic_DNA"/>
</dbReference>
<dbReference type="EMBL" id="AP014961">
    <property type="protein sequence ID" value="BAS94743.1"/>
    <property type="molecule type" value="Genomic_DNA"/>
</dbReference>
<dbReference type="EMBL" id="CM000142">
    <property type="protein sequence ID" value="EEE64246.1"/>
    <property type="molecule type" value="Genomic_DNA"/>
</dbReference>
<dbReference type="EMBL" id="AK242943">
    <property type="protein sequence ID" value="BAH01389.1"/>
    <property type="molecule type" value="mRNA"/>
</dbReference>
<dbReference type="EMBL" id="L12252">
    <property type="protein sequence ID" value="AAA72362.1"/>
    <property type="status" value="ALT_INIT"/>
    <property type="molecule type" value="mRNA"/>
</dbReference>
<dbReference type="PIR" id="JC4784">
    <property type="entry name" value="JC4784"/>
</dbReference>
<dbReference type="PIR" id="S20024">
    <property type="entry name" value="WMRZ19"/>
</dbReference>
<dbReference type="RefSeq" id="XP_015639142.1">
    <property type="nucleotide sequence ID" value="XM_015783656.1"/>
</dbReference>
<dbReference type="SMR" id="P29835"/>
<dbReference type="STRING" id="39947.P29835"/>
<dbReference type="Allergome" id="9528">
    <property type="allergen name" value="Ory s 19kD"/>
</dbReference>
<dbReference type="PaxDb" id="39947-P29835"/>
<dbReference type="EnsemblPlants" id="Os05t0499100-01">
    <property type="protein sequence ID" value="Os05t0499100-01"/>
    <property type="gene ID" value="Os05g0499100"/>
</dbReference>
<dbReference type="Gramene" id="Os05t0499100-01">
    <property type="protein sequence ID" value="Os05t0499100-01"/>
    <property type="gene ID" value="Os05g0499100"/>
</dbReference>
<dbReference type="KEGG" id="dosa:Os05g0499100"/>
<dbReference type="eggNOG" id="ENOG502R604">
    <property type="taxonomic scope" value="Eukaryota"/>
</dbReference>
<dbReference type="HOGENOM" id="CLU_1404429_0_0_1"/>
<dbReference type="InParanoid" id="P29835"/>
<dbReference type="OMA" id="RMRCCQQ"/>
<dbReference type="OrthoDB" id="653963at2759"/>
<dbReference type="Proteomes" id="UP000000763">
    <property type="component" value="Chromosome 5"/>
</dbReference>
<dbReference type="Proteomes" id="UP000007752">
    <property type="component" value="Chromosome 5"/>
</dbReference>
<dbReference type="Proteomes" id="UP000059680">
    <property type="component" value="Chromosome 5"/>
</dbReference>
<dbReference type="GO" id="GO:0005576">
    <property type="term" value="C:extracellular region"/>
    <property type="evidence" value="ECO:0007669"/>
    <property type="project" value="UniProtKB-SubCell"/>
</dbReference>
<dbReference type="GO" id="GO:0019863">
    <property type="term" value="F:IgE binding"/>
    <property type="evidence" value="ECO:0000314"/>
    <property type="project" value="UniProtKB"/>
</dbReference>
<dbReference type="GO" id="GO:0045735">
    <property type="term" value="F:nutrient reservoir activity"/>
    <property type="evidence" value="ECO:0007669"/>
    <property type="project" value="UniProtKB-KW"/>
</dbReference>
<dbReference type="CDD" id="cd00261">
    <property type="entry name" value="AAI_SS"/>
    <property type="match status" value="1"/>
</dbReference>
<dbReference type="Gene3D" id="1.10.110.10">
    <property type="entry name" value="Plant lipid-transfer and hydrophobic proteins"/>
    <property type="match status" value="1"/>
</dbReference>
<dbReference type="InterPro" id="IPR036312">
    <property type="entry name" value="Bifun_inhib/LTP/seed_sf"/>
</dbReference>
<dbReference type="InterPro" id="IPR016140">
    <property type="entry name" value="Bifunc_inhib/LTP/seed_store"/>
</dbReference>
<dbReference type="InterPro" id="IPR001419">
    <property type="entry name" value="Glutenin"/>
</dbReference>
<dbReference type="PANTHER" id="PTHR34481:SF9">
    <property type="entry name" value="19 KDA GLOBULIN"/>
    <property type="match status" value="1"/>
</dbReference>
<dbReference type="PANTHER" id="PTHR34481">
    <property type="entry name" value="TRYPSIN/FACTOR XIIA INHIBITOR-RELATED"/>
    <property type="match status" value="1"/>
</dbReference>
<dbReference type="Pfam" id="PF03157">
    <property type="entry name" value="Glutenin_hmw"/>
    <property type="match status" value="1"/>
</dbReference>
<dbReference type="Pfam" id="PF00234">
    <property type="entry name" value="Tryp_alpha_amyl"/>
    <property type="match status" value="1"/>
</dbReference>
<dbReference type="SMART" id="SM00499">
    <property type="entry name" value="AAI"/>
    <property type="match status" value="1"/>
</dbReference>
<dbReference type="SUPFAM" id="SSF47699">
    <property type="entry name" value="Bifunctional inhibitor/lipid-transfer protein/seed storage 2S albumin"/>
    <property type="match status" value="1"/>
</dbReference>
<organism>
    <name type="scientific">Oryza sativa subsp. japonica</name>
    <name type="common">Rice</name>
    <dbReference type="NCBI Taxonomy" id="39947"/>
    <lineage>
        <taxon>Eukaryota</taxon>
        <taxon>Viridiplantae</taxon>
        <taxon>Streptophyta</taxon>
        <taxon>Embryophyta</taxon>
        <taxon>Tracheophyta</taxon>
        <taxon>Spermatophyta</taxon>
        <taxon>Magnoliopsida</taxon>
        <taxon>Liliopsida</taxon>
        <taxon>Poales</taxon>
        <taxon>Poaceae</taxon>
        <taxon>BOP clade</taxon>
        <taxon>Oryzoideae</taxon>
        <taxon>Oryzeae</taxon>
        <taxon>Oryzinae</taxon>
        <taxon>Oryza</taxon>
        <taxon>Oryza sativa</taxon>
    </lineage>
</organism>
<proteinExistence type="evidence at protein level"/>
<name>GL19_ORYSJ</name>
<gene>
    <name type="ordered locus">Os05g0499100</name>
    <name type="ordered locus">LOC_Os05g41970</name>
    <name type="ORF">OJ1057_B02.5</name>
    <name evidence="6" type="ORF">OsJ_19079</name>
    <name type="ORF">P0010D04.16</name>
</gene>
<feature type="signal peptide" evidence="1">
    <location>
        <begin position="1"/>
        <end position="22"/>
    </location>
</feature>
<feature type="chain" id="PRO_0000032161" description="19 kDa globulin">
    <location>
        <begin position="23"/>
        <end position="186"/>
    </location>
</feature>
<feature type="region of interest" description="Disordered" evidence="2">
    <location>
        <begin position="108"/>
        <end position="155"/>
    </location>
</feature>
<feature type="compositionally biased region" description="Low complexity" evidence="2">
    <location>
        <begin position="110"/>
        <end position="149"/>
    </location>
</feature>
<feature type="sequence conflict" description="In Ref. 1; CAA45400 and 11; AAA72362." evidence="5" ref="1 11">
    <original>QL</original>
    <variation>HV</variation>
    <location>
        <begin position="23"/>
        <end position="24"/>
    </location>
</feature>